<name>ENO_IMPCY</name>
<sequence length="32" mass="3292">SGETEDVTIADIVVGLRIEEELGDAAVYAGAK</sequence>
<organism>
    <name type="scientific">Imperata cylindrica</name>
    <name type="common">Cogon grass</name>
    <dbReference type="NCBI Taxonomy" id="80369"/>
    <lineage>
        <taxon>Eukaryota</taxon>
        <taxon>Viridiplantae</taxon>
        <taxon>Streptophyta</taxon>
        <taxon>Embryophyta</taxon>
        <taxon>Tracheophyta</taxon>
        <taxon>Spermatophyta</taxon>
        <taxon>Magnoliopsida</taxon>
        <taxon>Liliopsida</taxon>
        <taxon>Poales</taxon>
        <taxon>Poaceae</taxon>
        <taxon>PACMAD clade</taxon>
        <taxon>Panicoideae</taxon>
        <taxon>Andropogonodae</taxon>
        <taxon>Andropogoneae</taxon>
        <taxon>Germainiinae</taxon>
        <taxon>Imperata</taxon>
    </lineage>
</organism>
<keyword id="KW-0963">Cytoplasm</keyword>
<keyword id="KW-0903">Direct protein sequencing</keyword>
<keyword id="KW-0324">Glycolysis</keyword>
<keyword id="KW-0456">Lyase</keyword>
<keyword id="KW-0460">Magnesium</keyword>
<protein>
    <recommendedName>
        <fullName>Enolase</fullName>
        <ecNumber>4.2.1.11</ecNumber>
    </recommendedName>
    <alternativeName>
        <fullName>2-phospho-D-glycerate hydro-lyase</fullName>
    </alternativeName>
    <alternativeName>
        <fullName>2-phosphoglycerate dehydratase</fullName>
    </alternativeName>
</protein>
<evidence type="ECO:0000250" key="1"/>
<evidence type="ECO:0000250" key="2">
    <source>
        <dbReference type="UniProtKB" id="P00924"/>
    </source>
</evidence>
<evidence type="ECO:0000255" key="3"/>
<evidence type="ECO:0000269" key="4">
    <source ref="1"/>
</evidence>
<evidence type="ECO:0000303" key="5">
    <source ref="1"/>
</evidence>
<evidence type="ECO:0000305" key="6"/>
<reference evidence="6" key="1">
    <citation type="journal article" date="2008" name="J. Med. Plant Res.">
        <title>Ecotypic variation of a medicinal plant Imperata cylindrica populations in Taiwan: mass spectrometry-based proteomic evidence.</title>
        <authorList>
            <person name="Chang I.-F."/>
        </authorList>
    </citation>
    <scope>PROTEIN SEQUENCE</scope>
    <source>
        <strain evidence="4">cv. Major</strain>
        <tissue evidence="4">Leaf</tissue>
    </source>
</reference>
<feature type="chain" id="PRO_0000134071" description="Enolase">
    <location>
        <begin position="1" status="less than"/>
        <end position="32" status="greater than"/>
    </location>
</feature>
<feature type="non-consecutive residues" evidence="5">
    <location>
        <begin position="17"/>
        <end position="18"/>
    </location>
</feature>
<feature type="non-terminal residue" evidence="5">
    <location>
        <position position="1"/>
    </location>
</feature>
<feature type="non-terminal residue" evidence="5">
    <location>
        <position position="32"/>
    </location>
</feature>
<proteinExistence type="evidence at protein level"/>
<comment type="catalytic activity">
    <reaction evidence="2">
        <text>(2R)-2-phosphoglycerate = phosphoenolpyruvate + H2O</text>
        <dbReference type="Rhea" id="RHEA:10164"/>
        <dbReference type="ChEBI" id="CHEBI:15377"/>
        <dbReference type="ChEBI" id="CHEBI:58289"/>
        <dbReference type="ChEBI" id="CHEBI:58702"/>
        <dbReference type="EC" id="4.2.1.11"/>
    </reaction>
</comment>
<comment type="cofactor">
    <cofactor evidence="1">
        <name>Mg(2+)</name>
        <dbReference type="ChEBI" id="CHEBI:18420"/>
    </cofactor>
    <text evidence="1">Mg(2+) is required for catalysis and for stabilizing the dimer.</text>
</comment>
<comment type="pathway">
    <text>Carbohydrate degradation; glycolysis; pyruvate from D-glyceraldehyde 3-phosphate: step 4/5.</text>
</comment>
<comment type="subunit">
    <text evidence="2">Homodimer.</text>
</comment>
<comment type="subcellular location">
    <subcellularLocation>
        <location evidence="1">Cytoplasm</location>
    </subcellularLocation>
</comment>
<comment type="similarity">
    <text evidence="3">Belongs to the enolase family.</text>
</comment>
<dbReference type="EC" id="4.2.1.11"/>
<dbReference type="SMR" id="P84208"/>
<dbReference type="UniPathway" id="UPA00109">
    <property type="reaction ID" value="UER00187"/>
</dbReference>
<dbReference type="GO" id="GO:0005737">
    <property type="term" value="C:cytoplasm"/>
    <property type="evidence" value="ECO:0007669"/>
    <property type="project" value="UniProtKB-SubCell"/>
</dbReference>
<dbReference type="GO" id="GO:0004634">
    <property type="term" value="F:phosphopyruvate hydratase activity"/>
    <property type="evidence" value="ECO:0007669"/>
    <property type="project" value="UniProtKB-EC"/>
</dbReference>
<dbReference type="GO" id="GO:0006096">
    <property type="term" value="P:glycolytic process"/>
    <property type="evidence" value="ECO:0007669"/>
    <property type="project" value="UniProtKB-UniPathway"/>
</dbReference>
<dbReference type="InterPro" id="IPR036849">
    <property type="entry name" value="Enolase-like_C_sf"/>
</dbReference>
<dbReference type="SUPFAM" id="SSF51604">
    <property type="entry name" value="Enolase C-terminal domain-like"/>
    <property type="match status" value="1"/>
</dbReference>
<accession>P84208</accession>